<protein>
    <recommendedName>
        <fullName evidence="1">Elongation factor Ts</fullName>
        <shortName evidence="1">EF-Ts</shortName>
    </recommendedName>
</protein>
<reference key="1">
    <citation type="journal article" date="2008" name="BMC Genomics">
        <title>The genome sequence of the fish pathogen Aliivibrio salmonicida strain LFI1238 shows extensive evidence of gene decay.</title>
        <authorList>
            <person name="Hjerde E."/>
            <person name="Lorentzen M.S."/>
            <person name="Holden M.T."/>
            <person name="Seeger K."/>
            <person name="Paulsen S."/>
            <person name="Bason N."/>
            <person name="Churcher C."/>
            <person name="Harris D."/>
            <person name="Norbertczak H."/>
            <person name="Quail M.A."/>
            <person name="Sanders S."/>
            <person name="Thurston S."/>
            <person name="Parkhill J."/>
            <person name="Willassen N.P."/>
            <person name="Thomson N.R."/>
        </authorList>
    </citation>
    <scope>NUCLEOTIDE SEQUENCE [LARGE SCALE GENOMIC DNA]</scope>
    <source>
        <strain>LFI1238</strain>
    </source>
</reference>
<sequence>MATVTAALVKELRERTAAGMMECKKALVEAEGDIELAIENMRKSGAAKAAKKAGNIAAEGTIIIKEEAGVAVLLEVNCQTDFVAKDSGFLGFANEVAEVALAERLNDIVALQAKFEDARIALVTKIGENISIRRVQLVEGVALASYRHGEKIGVVIAGEGDAETLKHIAMHVAASKPEYVNPSDVPADVVEKEKAVQVEIAMNEGKPQEIAEKMVIGRMKKFTGEVSLTGQAFIMEPKKTVADILKEKGASVSNFVRLEVGEGIEKAAEMSFADEVAAVQKG</sequence>
<gene>
    <name evidence="1" type="primary">tsf</name>
    <name type="ordered locus">VSAL_I2426</name>
</gene>
<evidence type="ECO:0000255" key="1">
    <source>
        <dbReference type="HAMAP-Rule" id="MF_00050"/>
    </source>
</evidence>
<proteinExistence type="inferred from homology"/>
<organism>
    <name type="scientific">Aliivibrio salmonicida (strain LFI1238)</name>
    <name type="common">Vibrio salmonicida (strain LFI1238)</name>
    <dbReference type="NCBI Taxonomy" id="316275"/>
    <lineage>
        <taxon>Bacteria</taxon>
        <taxon>Pseudomonadati</taxon>
        <taxon>Pseudomonadota</taxon>
        <taxon>Gammaproteobacteria</taxon>
        <taxon>Vibrionales</taxon>
        <taxon>Vibrionaceae</taxon>
        <taxon>Aliivibrio</taxon>
    </lineage>
</organism>
<dbReference type="EMBL" id="FM178379">
    <property type="protein sequence ID" value="CAQ80110.1"/>
    <property type="molecule type" value="Genomic_DNA"/>
</dbReference>
<dbReference type="RefSeq" id="WP_012550914.1">
    <property type="nucleotide sequence ID" value="NC_011312.1"/>
</dbReference>
<dbReference type="SMR" id="B6EK56"/>
<dbReference type="KEGG" id="vsa:VSAL_I2426"/>
<dbReference type="eggNOG" id="COG0264">
    <property type="taxonomic scope" value="Bacteria"/>
</dbReference>
<dbReference type="HOGENOM" id="CLU_047155_0_2_6"/>
<dbReference type="Proteomes" id="UP000001730">
    <property type="component" value="Chromosome 1"/>
</dbReference>
<dbReference type="GO" id="GO:0005737">
    <property type="term" value="C:cytoplasm"/>
    <property type="evidence" value="ECO:0007669"/>
    <property type="project" value="UniProtKB-SubCell"/>
</dbReference>
<dbReference type="GO" id="GO:0003746">
    <property type="term" value="F:translation elongation factor activity"/>
    <property type="evidence" value="ECO:0007669"/>
    <property type="project" value="UniProtKB-UniRule"/>
</dbReference>
<dbReference type="CDD" id="cd14275">
    <property type="entry name" value="UBA_EF-Ts"/>
    <property type="match status" value="1"/>
</dbReference>
<dbReference type="FunFam" id="1.10.286.20:FF:000001">
    <property type="entry name" value="Elongation factor Ts"/>
    <property type="match status" value="1"/>
</dbReference>
<dbReference type="FunFam" id="1.10.8.10:FF:000001">
    <property type="entry name" value="Elongation factor Ts"/>
    <property type="match status" value="1"/>
</dbReference>
<dbReference type="FunFam" id="3.30.479.20:FF:000001">
    <property type="entry name" value="Elongation factor Ts"/>
    <property type="match status" value="1"/>
</dbReference>
<dbReference type="Gene3D" id="1.10.286.20">
    <property type="match status" value="1"/>
</dbReference>
<dbReference type="Gene3D" id="1.10.8.10">
    <property type="entry name" value="DNA helicase RuvA subunit, C-terminal domain"/>
    <property type="match status" value="1"/>
</dbReference>
<dbReference type="Gene3D" id="3.30.479.20">
    <property type="entry name" value="Elongation factor Ts, dimerisation domain"/>
    <property type="match status" value="2"/>
</dbReference>
<dbReference type="HAMAP" id="MF_00050">
    <property type="entry name" value="EF_Ts"/>
    <property type="match status" value="1"/>
</dbReference>
<dbReference type="InterPro" id="IPR036402">
    <property type="entry name" value="EF-Ts_dimer_sf"/>
</dbReference>
<dbReference type="InterPro" id="IPR001816">
    <property type="entry name" value="Transl_elong_EFTs/EF1B"/>
</dbReference>
<dbReference type="InterPro" id="IPR014039">
    <property type="entry name" value="Transl_elong_EFTs/EF1B_dimer"/>
</dbReference>
<dbReference type="InterPro" id="IPR018101">
    <property type="entry name" value="Transl_elong_Ts_CS"/>
</dbReference>
<dbReference type="InterPro" id="IPR009060">
    <property type="entry name" value="UBA-like_sf"/>
</dbReference>
<dbReference type="NCBIfam" id="TIGR00116">
    <property type="entry name" value="tsf"/>
    <property type="match status" value="1"/>
</dbReference>
<dbReference type="PANTHER" id="PTHR11741">
    <property type="entry name" value="ELONGATION FACTOR TS"/>
    <property type="match status" value="1"/>
</dbReference>
<dbReference type="PANTHER" id="PTHR11741:SF0">
    <property type="entry name" value="ELONGATION FACTOR TS, MITOCHONDRIAL"/>
    <property type="match status" value="1"/>
</dbReference>
<dbReference type="Pfam" id="PF00889">
    <property type="entry name" value="EF_TS"/>
    <property type="match status" value="1"/>
</dbReference>
<dbReference type="SUPFAM" id="SSF54713">
    <property type="entry name" value="Elongation factor Ts (EF-Ts), dimerisation domain"/>
    <property type="match status" value="2"/>
</dbReference>
<dbReference type="SUPFAM" id="SSF46934">
    <property type="entry name" value="UBA-like"/>
    <property type="match status" value="1"/>
</dbReference>
<dbReference type="PROSITE" id="PS01127">
    <property type="entry name" value="EF_TS_2"/>
    <property type="match status" value="1"/>
</dbReference>
<comment type="function">
    <text evidence="1">Associates with the EF-Tu.GDP complex and induces the exchange of GDP to GTP. It remains bound to the aminoacyl-tRNA.EF-Tu.GTP complex up to the GTP hydrolysis stage on the ribosome.</text>
</comment>
<comment type="subcellular location">
    <subcellularLocation>
        <location evidence="1">Cytoplasm</location>
    </subcellularLocation>
</comment>
<comment type="similarity">
    <text evidence="1">Belongs to the EF-Ts family.</text>
</comment>
<accession>B6EK56</accession>
<name>EFTS_ALISL</name>
<keyword id="KW-0963">Cytoplasm</keyword>
<keyword id="KW-0251">Elongation factor</keyword>
<keyword id="KW-0648">Protein biosynthesis</keyword>
<feature type="chain" id="PRO_1000116684" description="Elongation factor Ts">
    <location>
        <begin position="1"/>
        <end position="282"/>
    </location>
</feature>
<feature type="region of interest" description="Involved in Mg(2+) ion dislocation from EF-Tu" evidence="1">
    <location>
        <begin position="80"/>
        <end position="83"/>
    </location>
</feature>